<evidence type="ECO:0000255" key="1">
    <source>
        <dbReference type="HAMAP-Rule" id="MF_00034"/>
    </source>
</evidence>
<reference key="1">
    <citation type="submission" date="2006-12" db="EMBL/GenBank/DDBJ databases">
        <title>Complete sequence of chromosome 1 of Nocardioides sp. JS614.</title>
        <authorList>
            <person name="Copeland A."/>
            <person name="Lucas S."/>
            <person name="Lapidus A."/>
            <person name="Barry K."/>
            <person name="Detter J.C."/>
            <person name="Glavina del Rio T."/>
            <person name="Hammon N."/>
            <person name="Israni S."/>
            <person name="Dalin E."/>
            <person name="Tice H."/>
            <person name="Pitluck S."/>
            <person name="Thompson L.S."/>
            <person name="Brettin T."/>
            <person name="Bruce D."/>
            <person name="Han C."/>
            <person name="Tapia R."/>
            <person name="Schmutz J."/>
            <person name="Larimer F."/>
            <person name="Land M."/>
            <person name="Hauser L."/>
            <person name="Kyrpides N."/>
            <person name="Kim E."/>
            <person name="Mattes T."/>
            <person name="Gossett J."/>
            <person name="Richardson P."/>
        </authorList>
    </citation>
    <scope>NUCLEOTIDE SEQUENCE [LARGE SCALE GENOMIC DNA]</scope>
    <source>
        <strain>ATCC BAA-499 / JS614</strain>
    </source>
</reference>
<gene>
    <name evidence="1" type="primary">ruvC</name>
    <name type="ordered locus">Noca_2385</name>
</gene>
<accession>A1SJA5</accession>
<comment type="function">
    <text evidence="1">The RuvA-RuvB-RuvC complex processes Holliday junction (HJ) DNA during genetic recombination and DNA repair. Endonuclease that resolves HJ intermediates. Cleaves cruciform DNA by making single-stranded nicks across the HJ at symmetrical positions within the homologous arms, yielding a 5'-phosphate and a 3'-hydroxyl group; requires a central core of homology in the junction. The consensus cleavage sequence is 5'-(A/T)TT(C/G)-3'. Cleavage occurs on the 3'-side of the TT dinucleotide at the point of strand exchange. HJ branch migration catalyzed by RuvA-RuvB allows RuvC to scan DNA until it finds its consensus sequence, where it cleaves and resolves the cruciform DNA.</text>
</comment>
<comment type="catalytic activity">
    <reaction evidence="1">
        <text>Endonucleolytic cleavage at a junction such as a reciprocal single-stranded crossover between two homologous DNA duplexes (Holliday junction).</text>
        <dbReference type="EC" id="3.1.21.10"/>
    </reaction>
</comment>
<comment type="cofactor">
    <cofactor evidence="1">
        <name>Mg(2+)</name>
        <dbReference type="ChEBI" id="CHEBI:18420"/>
    </cofactor>
    <text evidence="1">Binds 2 Mg(2+) ion per subunit.</text>
</comment>
<comment type="subunit">
    <text evidence="1">Homodimer which binds Holliday junction (HJ) DNA. The HJ becomes 2-fold symmetrical on binding to RuvC with unstacked arms; it has a different conformation from HJ DNA in complex with RuvA. In the full resolvosome a probable DNA-RuvA(4)-RuvB(12)-RuvC(2) complex forms which resolves the HJ.</text>
</comment>
<comment type="subcellular location">
    <subcellularLocation>
        <location evidence="1">Cytoplasm</location>
    </subcellularLocation>
</comment>
<comment type="similarity">
    <text evidence="1">Belongs to the RuvC family.</text>
</comment>
<protein>
    <recommendedName>
        <fullName evidence="1">Crossover junction endodeoxyribonuclease RuvC</fullName>
        <ecNumber evidence="1">3.1.21.10</ecNumber>
    </recommendedName>
    <alternativeName>
        <fullName evidence="1">Holliday junction nuclease RuvC</fullName>
    </alternativeName>
    <alternativeName>
        <fullName evidence="1">Holliday junction resolvase RuvC</fullName>
    </alternativeName>
</protein>
<keyword id="KW-0963">Cytoplasm</keyword>
<keyword id="KW-0227">DNA damage</keyword>
<keyword id="KW-0233">DNA recombination</keyword>
<keyword id="KW-0234">DNA repair</keyword>
<keyword id="KW-0238">DNA-binding</keyword>
<keyword id="KW-0255">Endonuclease</keyword>
<keyword id="KW-0378">Hydrolase</keyword>
<keyword id="KW-0460">Magnesium</keyword>
<keyword id="KW-0479">Metal-binding</keyword>
<keyword id="KW-0540">Nuclease</keyword>
<keyword id="KW-1185">Reference proteome</keyword>
<proteinExistence type="inferred from homology"/>
<feature type="chain" id="PRO_1000002784" description="Crossover junction endodeoxyribonuclease RuvC">
    <location>
        <begin position="1"/>
        <end position="177"/>
    </location>
</feature>
<feature type="active site" evidence="1">
    <location>
        <position position="7"/>
    </location>
</feature>
<feature type="active site" evidence="1">
    <location>
        <position position="68"/>
    </location>
</feature>
<feature type="active site" evidence="1">
    <location>
        <position position="141"/>
    </location>
</feature>
<feature type="binding site" evidence="1">
    <location>
        <position position="7"/>
    </location>
    <ligand>
        <name>Mg(2+)</name>
        <dbReference type="ChEBI" id="CHEBI:18420"/>
        <label>1</label>
    </ligand>
</feature>
<feature type="binding site" evidence="1">
    <location>
        <position position="68"/>
    </location>
    <ligand>
        <name>Mg(2+)</name>
        <dbReference type="ChEBI" id="CHEBI:18420"/>
        <label>2</label>
    </ligand>
</feature>
<feature type="binding site" evidence="1">
    <location>
        <position position="141"/>
    </location>
    <ligand>
        <name>Mg(2+)</name>
        <dbReference type="ChEBI" id="CHEBI:18420"/>
        <label>1</label>
    </ligand>
</feature>
<dbReference type="EC" id="3.1.21.10" evidence="1"/>
<dbReference type="EMBL" id="CP000509">
    <property type="protein sequence ID" value="ABL81890.1"/>
    <property type="molecule type" value="Genomic_DNA"/>
</dbReference>
<dbReference type="RefSeq" id="WP_011755831.1">
    <property type="nucleotide sequence ID" value="NC_008699.1"/>
</dbReference>
<dbReference type="SMR" id="A1SJA5"/>
<dbReference type="STRING" id="196162.Noca_2385"/>
<dbReference type="KEGG" id="nca:Noca_2385"/>
<dbReference type="eggNOG" id="COG0817">
    <property type="taxonomic scope" value="Bacteria"/>
</dbReference>
<dbReference type="HOGENOM" id="CLU_091257_0_2_11"/>
<dbReference type="OrthoDB" id="9805499at2"/>
<dbReference type="Proteomes" id="UP000000640">
    <property type="component" value="Chromosome"/>
</dbReference>
<dbReference type="GO" id="GO:0005737">
    <property type="term" value="C:cytoplasm"/>
    <property type="evidence" value="ECO:0007669"/>
    <property type="project" value="UniProtKB-SubCell"/>
</dbReference>
<dbReference type="GO" id="GO:0048476">
    <property type="term" value="C:Holliday junction resolvase complex"/>
    <property type="evidence" value="ECO:0007669"/>
    <property type="project" value="UniProtKB-UniRule"/>
</dbReference>
<dbReference type="GO" id="GO:0008821">
    <property type="term" value="F:crossover junction DNA endonuclease activity"/>
    <property type="evidence" value="ECO:0007669"/>
    <property type="project" value="UniProtKB-UniRule"/>
</dbReference>
<dbReference type="GO" id="GO:0003677">
    <property type="term" value="F:DNA binding"/>
    <property type="evidence" value="ECO:0007669"/>
    <property type="project" value="UniProtKB-KW"/>
</dbReference>
<dbReference type="GO" id="GO:0000287">
    <property type="term" value="F:magnesium ion binding"/>
    <property type="evidence" value="ECO:0007669"/>
    <property type="project" value="UniProtKB-UniRule"/>
</dbReference>
<dbReference type="GO" id="GO:0006310">
    <property type="term" value="P:DNA recombination"/>
    <property type="evidence" value="ECO:0007669"/>
    <property type="project" value="UniProtKB-UniRule"/>
</dbReference>
<dbReference type="GO" id="GO:0006281">
    <property type="term" value="P:DNA repair"/>
    <property type="evidence" value="ECO:0007669"/>
    <property type="project" value="UniProtKB-UniRule"/>
</dbReference>
<dbReference type="CDD" id="cd16962">
    <property type="entry name" value="RuvC"/>
    <property type="match status" value="1"/>
</dbReference>
<dbReference type="FunFam" id="3.30.420.10:FF:000002">
    <property type="entry name" value="Crossover junction endodeoxyribonuclease RuvC"/>
    <property type="match status" value="1"/>
</dbReference>
<dbReference type="Gene3D" id="3.30.420.10">
    <property type="entry name" value="Ribonuclease H-like superfamily/Ribonuclease H"/>
    <property type="match status" value="1"/>
</dbReference>
<dbReference type="HAMAP" id="MF_00034">
    <property type="entry name" value="RuvC"/>
    <property type="match status" value="1"/>
</dbReference>
<dbReference type="InterPro" id="IPR012337">
    <property type="entry name" value="RNaseH-like_sf"/>
</dbReference>
<dbReference type="InterPro" id="IPR036397">
    <property type="entry name" value="RNaseH_sf"/>
</dbReference>
<dbReference type="InterPro" id="IPR020563">
    <property type="entry name" value="X-over_junc_endoDNase_Mg_BS"/>
</dbReference>
<dbReference type="InterPro" id="IPR002176">
    <property type="entry name" value="X-over_junc_endoDNase_RuvC"/>
</dbReference>
<dbReference type="NCBIfam" id="TIGR00228">
    <property type="entry name" value="ruvC"/>
    <property type="match status" value="1"/>
</dbReference>
<dbReference type="PANTHER" id="PTHR30194">
    <property type="entry name" value="CROSSOVER JUNCTION ENDODEOXYRIBONUCLEASE RUVC"/>
    <property type="match status" value="1"/>
</dbReference>
<dbReference type="PANTHER" id="PTHR30194:SF3">
    <property type="entry name" value="CROSSOVER JUNCTION ENDODEOXYRIBONUCLEASE RUVC"/>
    <property type="match status" value="1"/>
</dbReference>
<dbReference type="Pfam" id="PF02075">
    <property type="entry name" value="RuvC"/>
    <property type="match status" value="1"/>
</dbReference>
<dbReference type="PRINTS" id="PR00696">
    <property type="entry name" value="RSOLVASERUVC"/>
</dbReference>
<dbReference type="SUPFAM" id="SSF53098">
    <property type="entry name" value="Ribonuclease H-like"/>
    <property type="match status" value="1"/>
</dbReference>
<dbReference type="PROSITE" id="PS01321">
    <property type="entry name" value="RUVC"/>
    <property type="match status" value="1"/>
</dbReference>
<sequence>MRVLGIDPGLTRCGMGVVDGSVGRPLTLVDVNVLRTSADLPVPERLVTIERGVEAWIEEHAPDAVAIERVFARSDVSTVMGTAQASGVAMVVAARRGLPIGLHTPSEVKAAVSGNGRAGKAQVGAMVTRILRLDVMPKPADAADALALAITHIWRGGAQARIDAAVTAARQQVRSRR</sequence>
<name>RUVC_NOCSJ</name>
<organism>
    <name type="scientific">Nocardioides sp. (strain ATCC BAA-499 / JS614)</name>
    <dbReference type="NCBI Taxonomy" id="196162"/>
    <lineage>
        <taxon>Bacteria</taxon>
        <taxon>Bacillati</taxon>
        <taxon>Actinomycetota</taxon>
        <taxon>Actinomycetes</taxon>
        <taxon>Propionibacteriales</taxon>
        <taxon>Nocardioidaceae</taxon>
        <taxon>Nocardioides</taxon>
    </lineage>
</organism>